<accession>Q567V6</accession>
<evidence type="ECO:0000255" key="1">
    <source>
        <dbReference type="HAMAP-Rule" id="MF_03010"/>
    </source>
</evidence>
<evidence type="ECO:0000255" key="2">
    <source>
        <dbReference type="PROSITE-ProRule" id="PRU01185"/>
    </source>
</evidence>
<comment type="function">
    <text evidence="1">Component of the eukaryotic translation initiation factor 3 (eIF-3) complex, which is involved in protein synthesis of a specialized repertoire of mRNAs and, together with other initiation factors, stimulates binding of mRNA and methionyl-tRNAi to the 40S ribosome. The eIF-3 complex specifically targets and initiates translation of a subset of mRNAs involved in cell proliferation.</text>
</comment>
<comment type="subunit">
    <text evidence="1">Component of the eukaryotic translation initiation factor 3 (eIF-3) complex, which is composed of 13 subunits: eif3a, eif3b, eif3c, eif3d, eif3e, eif3f, eif3g, eif3h, eif3i, eif3j, eif3k, eif3l and eif3m.</text>
</comment>
<comment type="subcellular location">
    <subcellularLocation>
        <location evidence="1">Nucleus</location>
    </subcellularLocation>
    <subcellularLocation>
        <location evidence="1">Cytoplasm</location>
    </subcellularLocation>
</comment>
<comment type="similarity">
    <text evidence="1">Belongs to the eIF-3 subunit K family.</text>
</comment>
<proteinExistence type="evidence at transcript level"/>
<sequence length="219" mass="25427">MATTFEQMRANVGKLLRGIDRYNPENLATLERYVDTQARENAYDLEANLAVLKLYQFNLAYFQTTVTAQILLKALTNLPHTDFTLCKCMIDQTHQEERPIRQILYLGNLLETCHFQSFWASLEENRDLIDGITGFEESVRKFICHVVGITYQNIEYRLLAEMLGDPLDTQVKVWMNKYGWTENEDGQIFIHNQEESVKPKNIVEKIDFESVSSIMATSQ</sequence>
<organism>
    <name type="scientific">Danio rerio</name>
    <name type="common">Zebrafish</name>
    <name type="synonym">Brachydanio rerio</name>
    <dbReference type="NCBI Taxonomy" id="7955"/>
    <lineage>
        <taxon>Eukaryota</taxon>
        <taxon>Metazoa</taxon>
        <taxon>Chordata</taxon>
        <taxon>Craniata</taxon>
        <taxon>Vertebrata</taxon>
        <taxon>Euteleostomi</taxon>
        <taxon>Actinopterygii</taxon>
        <taxon>Neopterygii</taxon>
        <taxon>Teleostei</taxon>
        <taxon>Ostariophysi</taxon>
        <taxon>Cypriniformes</taxon>
        <taxon>Danionidae</taxon>
        <taxon>Danioninae</taxon>
        <taxon>Danio</taxon>
    </lineage>
</organism>
<name>EIF3K_DANRE</name>
<reference key="1">
    <citation type="submission" date="2005-04" db="EMBL/GenBank/DDBJ databases">
        <authorList>
            <consortium name="NIH - Zebrafish Gene Collection (ZGC) project"/>
        </authorList>
    </citation>
    <scope>NUCLEOTIDE SEQUENCE [LARGE SCALE MRNA]</scope>
    <source>
        <tissue>Embryo</tissue>
    </source>
</reference>
<dbReference type="EMBL" id="BC093002">
    <property type="protein sequence ID" value="AAH93002.1"/>
    <property type="molecule type" value="mRNA"/>
</dbReference>
<dbReference type="RefSeq" id="NP_001017583.1">
    <property type="nucleotide sequence ID" value="NM_001017583.1"/>
</dbReference>
<dbReference type="SMR" id="Q567V6"/>
<dbReference type="FunCoup" id="Q567V6">
    <property type="interactions" value="2949"/>
</dbReference>
<dbReference type="STRING" id="7955.ENSDARP00000089482"/>
<dbReference type="PaxDb" id="7955-ENSDARP00000089482"/>
<dbReference type="GeneID" id="550245"/>
<dbReference type="KEGG" id="dre:550245"/>
<dbReference type="AGR" id="ZFIN:ZDB-GENE-050417-45"/>
<dbReference type="CTD" id="27335"/>
<dbReference type="ZFIN" id="ZDB-GENE-050417-45">
    <property type="gene designation" value="eif3k"/>
</dbReference>
<dbReference type="eggNOG" id="KOG3252">
    <property type="taxonomic scope" value="Eukaryota"/>
</dbReference>
<dbReference type="InParanoid" id="Q567V6"/>
<dbReference type="OrthoDB" id="337745at2759"/>
<dbReference type="PhylomeDB" id="Q567V6"/>
<dbReference type="Reactome" id="R-DRE-156827">
    <property type="pathway name" value="L13a-mediated translational silencing of Ceruloplasmin expression"/>
</dbReference>
<dbReference type="Reactome" id="R-DRE-72689">
    <property type="pathway name" value="Formation of a pool of free 40S subunits"/>
</dbReference>
<dbReference type="Reactome" id="R-DRE-72695">
    <property type="pathway name" value="Formation of the ternary complex, and subsequently, the 43S complex"/>
</dbReference>
<dbReference type="Reactome" id="R-DRE-72702">
    <property type="pathway name" value="Ribosomal scanning and start codon recognition"/>
</dbReference>
<dbReference type="PRO" id="PR:Q567V6"/>
<dbReference type="Proteomes" id="UP000000437">
    <property type="component" value="Chromosome 15"/>
</dbReference>
<dbReference type="GO" id="GO:0016282">
    <property type="term" value="C:eukaryotic 43S preinitiation complex"/>
    <property type="evidence" value="ECO:0007669"/>
    <property type="project" value="UniProtKB-UniRule"/>
</dbReference>
<dbReference type="GO" id="GO:0033290">
    <property type="term" value="C:eukaryotic 48S preinitiation complex"/>
    <property type="evidence" value="ECO:0007669"/>
    <property type="project" value="UniProtKB-UniRule"/>
</dbReference>
<dbReference type="GO" id="GO:0005852">
    <property type="term" value="C:eukaryotic translation initiation factor 3 complex"/>
    <property type="evidence" value="ECO:0000250"/>
    <property type="project" value="UniProtKB"/>
</dbReference>
<dbReference type="GO" id="GO:0005634">
    <property type="term" value="C:nucleus"/>
    <property type="evidence" value="ECO:0007669"/>
    <property type="project" value="UniProtKB-SubCell"/>
</dbReference>
<dbReference type="GO" id="GO:0043022">
    <property type="term" value="F:ribosome binding"/>
    <property type="evidence" value="ECO:0007669"/>
    <property type="project" value="InterPro"/>
</dbReference>
<dbReference type="GO" id="GO:0003723">
    <property type="term" value="F:RNA binding"/>
    <property type="evidence" value="ECO:0007669"/>
    <property type="project" value="UniProtKB-UniRule"/>
</dbReference>
<dbReference type="GO" id="GO:0003743">
    <property type="term" value="F:translation initiation factor activity"/>
    <property type="evidence" value="ECO:0007669"/>
    <property type="project" value="UniProtKB-UniRule"/>
</dbReference>
<dbReference type="GO" id="GO:0001732">
    <property type="term" value="P:formation of cytoplasmic translation initiation complex"/>
    <property type="evidence" value="ECO:0007669"/>
    <property type="project" value="UniProtKB-UniRule"/>
</dbReference>
<dbReference type="GO" id="GO:0006446">
    <property type="term" value="P:regulation of translational initiation"/>
    <property type="evidence" value="ECO:0007669"/>
    <property type="project" value="InterPro"/>
</dbReference>
<dbReference type="GO" id="GO:0006413">
    <property type="term" value="P:translational initiation"/>
    <property type="evidence" value="ECO:0000250"/>
    <property type="project" value="UniProtKB"/>
</dbReference>
<dbReference type="FunFam" id="1.10.10.10:FF:000212">
    <property type="entry name" value="Eukaryotic translation initiation factor 3 subunit K"/>
    <property type="match status" value="1"/>
</dbReference>
<dbReference type="FunFam" id="1.25.40.250:FF:000001">
    <property type="entry name" value="Eukaryotic translation initiation factor 3 subunit K"/>
    <property type="match status" value="1"/>
</dbReference>
<dbReference type="Gene3D" id="1.25.40.250">
    <property type="entry name" value="ARM repeat, domain 1"/>
    <property type="match status" value="1"/>
</dbReference>
<dbReference type="Gene3D" id="1.10.10.10">
    <property type="entry name" value="Winged helix-like DNA-binding domain superfamily/Winged helix DNA-binding domain"/>
    <property type="match status" value="1"/>
</dbReference>
<dbReference type="HAMAP" id="MF_03010">
    <property type="entry name" value="eIF3k"/>
    <property type="match status" value="1"/>
</dbReference>
<dbReference type="InterPro" id="IPR016024">
    <property type="entry name" value="ARM-type_fold"/>
</dbReference>
<dbReference type="InterPro" id="IPR033464">
    <property type="entry name" value="CSN8_PSD8_EIF3K"/>
</dbReference>
<dbReference type="InterPro" id="IPR009374">
    <property type="entry name" value="eIF3k"/>
</dbReference>
<dbReference type="InterPro" id="IPR000717">
    <property type="entry name" value="PCI_dom"/>
</dbReference>
<dbReference type="InterPro" id="IPR016020">
    <property type="entry name" value="Transl_init_fac_sub12_N_euk"/>
</dbReference>
<dbReference type="InterPro" id="IPR036388">
    <property type="entry name" value="WH-like_DNA-bd_sf"/>
</dbReference>
<dbReference type="InterPro" id="IPR036390">
    <property type="entry name" value="WH_DNA-bd_sf"/>
</dbReference>
<dbReference type="PANTHER" id="PTHR13022">
    <property type="entry name" value="EUKARYOTIC TRANSLATION INITIATION FACTOR 3 SUBUNIT 11"/>
    <property type="match status" value="1"/>
</dbReference>
<dbReference type="PANTHER" id="PTHR13022:SF0">
    <property type="entry name" value="EUKARYOTIC TRANSLATION INITIATION FACTOR 3 SUBUNIT K"/>
    <property type="match status" value="1"/>
</dbReference>
<dbReference type="Pfam" id="PF10075">
    <property type="entry name" value="CSN8_PSD8_EIF3K"/>
    <property type="match status" value="1"/>
</dbReference>
<dbReference type="SUPFAM" id="SSF48371">
    <property type="entry name" value="ARM repeat"/>
    <property type="match status" value="1"/>
</dbReference>
<dbReference type="SUPFAM" id="SSF46785">
    <property type="entry name" value="Winged helix' DNA-binding domain"/>
    <property type="match status" value="1"/>
</dbReference>
<dbReference type="PROSITE" id="PS50250">
    <property type="entry name" value="PCI"/>
    <property type="match status" value="1"/>
</dbReference>
<keyword id="KW-0963">Cytoplasm</keyword>
<keyword id="KW-0396">Initiation factor</keyword>
<keyword id="KW-0539">Nucleus</keyword>
<keyword id="KW-0648">Protein biosynthesis</keyword>
<keyword id="KW-1185">Reference proteome</keyword>
<gene>
    <name type="primary">eif3k</name>
    <name type="synonym">eif3s12</name>
    <name type="ORF">zgc:110726</name>
</gene>
<protein>
    <recommendedName>
        <fullName evidence="1">Eukaryotic translation initiation factor 3 subunit K</fullName>
        <shortName evidence="1">eIF3k</shortName>
    </recommendedName>
    <alternativeName>
        <fullName evidence="1">Eukaryotic translation initiation factor 3 subunit 12</fullName>
    </alternativeName>
    <alternativeName>
        <fullName evidence="1">eIF-3 p25</fullName>
    </alternativeName>
</protein>
<feature type="chain" id="PRO_0000365031" description="Eukaryotic translation initiation factor 3 subunit K">
    <location>
        <begin position="1"/>
        <end position="219"/>
    </location>
</feature>
<feature type="domain" description="PCI" evidence="2">
    <location>
        <begin position="43"/>
        <end position="205"/>
    </location>
</feature>